<name>DB119_MACFA</name>
<sequence length="84" mass="9856">MKFLFLFLAILLATKIPVISGKRHNLRCMGNSGICRASCKKNEQPYLYCRNYQACCLQSYMRISISGKEENTDWSYEKQWPRLP</sequence>
<reference key="1">
    <citation type="submission" date="2006-11" db="EMBL/GenBank/DDBJ databases">
        <title>Evolution and sequence variation of human beta-defensin genes.</title>
        <authorList>
            <person name="Hollox E.J."/>
            <person name="Armour J.A.L."/>
        </authorList>
    </citation>
    <scope>NUCLEOTIDE SEQUENCE [GENOMIC DNA] (ISOFORMS 1 AND 2)</scope>
</reference>
<dbReference type="EMBL" id="AM410133">
    <property type="protein sequence ID" value="CAL68948.1"/>
    <property type="molecule type" value="Genomic_DNA"/>
</dbReference>
<dbReference type="EMBL" id="AM410138">
    <property type="protein sequence ID" value="CAL68953.1"/>
    <property type="molecule type" value="Genomic_DNA"/>
</dbReference>
<dbReference type="SMR" id="A4H228"/>
<dbReference type="Proteomes" id="UP000233100">
    <property type="component" value="Unplaced"/>
</dbReference>
<dbReference type="GO" id="GO:0005576">
    <property type="term" value="C:extracellular region"/>
    <property type="evidence" value="ECO:0007669"/>
    <property type="project" value="UniProtKB-SubCell"/>
</dbReference>
<dbReference type="GO" id="GO:0001530">
    <property type="term" value="F:lipopolysaccharide binding"/>
    <property type="evidence" value="ECO:0007669"/>
    <property type="project" value="TreeGrafter"/>
</dbReference>
<dbReference type="GO" id="GO:0061760">
    <property type="term" value="P:antifungal innate immune response"/>
    <property type="evidence" value="ECO:0007669"/>
    <property type="project" value="TreeGrafter"/>
</dbReference>
<dbReference type="GO" id="GO:0050829">
    <property type="term" value="P:defense response to Gram-negative bacterium"/>
    <property type="evidence" value="ECO:0007669"/>
    <property type="project" value="InterPro"/>
</dbReference>
<dbReference type="GO" id="GO:0050830">
    <property type="term" value="P:defense response to Gram-positive bacterium"/>
    <property type="evidence" value="ECO:0007669"/>
    <property type="project" value="InterPro"/>
</dbReference>
<dbReference type="InterPro" id="IPR028060">
    <property type="entry name" value="Defensin_big_dom"/>
</dbReference>
<dbReference type="PANTHER" id="PTHR47902">
    <property type="entry name" value="BETA-DEFENSIN 119"/>
    <property type="match status" value="1"/>
</dbReference>
<dbReference type="PANTHER" id="PTHR47902:SF1">
    <property type="entry name" value="BETA-DEFENSIN 119"/>
    <property type="match status" value="1"/>
</dbReference>
<dbReference type="Pfam" id="PF14862">
    <property type="entry name" value="Defensin_big"/>
    <property type="match status" value="1"/>
</dbReference>
<keyword id="KW-0025">Alternative splicing</keyword>
<keyword id="KW-0044">Antibiotic</keyword>
<keyword id="KW-0929">Antimicrobial</keyword>
<keyword id="KW-0211">Defensin</keyword>
<keyword id="KW-1015">Disulfide bond</keyword>
<keyword id="KW-1185">Reference proteome</keyword>
<keyword id="KW-0964">Secreted</keyword>
<keyword id="KW-0732">Signal</keyword>
<accession>A4H228</accession>
<accession>A4H233</accession>
<organism>
    <name type="scientific">Macaca fascicularis</name>
    <name type="common">Crab-eating macaque</name>
    <name type="synonym">Cynomolgus monkey</name>
    <dbReference type="NCBI Taxonomy" id="9541"/>
    <lineage>
        <taxon>Eukaryota</taxon>
        <taxon>Metazoa</taxon>
        <taxon>Chordata</taxon>
        <taxon>Craniata</taxon>
        <taxon>Vertebrata</taxon>
        <taxon>Euteleostomi</taxon>
        <taxon>Mammalia</taxon>
        <taxon>Eutheria</taxon>
        <taxon>Euarchontoglires</taxon>
        <taxon>Primates</taxon>
        <taxon>Haplorrhini</taxon>
        <taxon>Catarrhini</taxon>
        <taxon>Cercopithecidae</taxon>
        <taxon>Cercopithecinae</taxon>
        <taxon>Macaca</taxon>
    </lineage>
</organism>
<comment type="function">
    <text evidence="3">Has antibacterial activity.</text>
</comment>
<comment type="subcellular location">
    <subcellularLocation>
        <location evidence="3">Secreted</location>
    </subcellularLocation>
</comment>
<comment type="alternative products">
    <event type="alternative splicing"/>
    <isoform>
        <id>A4H228-1</id>
        <name>1</name>
        <sequence type="displayed"/>
    </isoform>
    <isoform>
        <id>A4H228-2</id>
        <name>2</name>
        <sequence type="described" ref="VSP_029873"/>
    </isoform>
</comment>
<comment type="similarity">
    <text evidence="3">Belongs to the beta-defensin family.</text>
</comment>
<protein>
    <recommendedName>
        <fullName>Beta-defensin 119</fullName>
    </recommendedName>
    <alternativeName>
        <fullName>Beta-defensin 120</fullName>
    </alternativeName>
    <alternativeName>
        <fullName>Defensin, beta 119</fullName>
    </alternativeName>
    <alternativeName>
        <fullName>Defensin, beta 120</fullName>
    </alternativeName>
</protein>
<feature type="signal peptide" evidence="2">
    <location>
        <begin position="1"/>
        <end position="21"/>
    </location>
</feature>
<feature type="peptide" id="PRO_0000289832" description="Beta-defensin 119">
    <location>
        <begin position="22"/>
        <end position="84"/>
    </location>
</feature>
<feature type="disulfide bond" evidence="1">
    <location>
        <begin position="28"/>
        <end position="55"/>
    </location>
</feature>
<feature type="disulfide bond" evidence="1">
    <location>
        <begin position="35"/>
        <end position="49"/>
    </location>
</feature>
<feature type="disulfide bond" evidence="1">
    <location>
        <begin position="39"/>
        <end position="56"/>
    </location>
</feature>
<feature type="splice variant" id="VSP_029873" description="In isoform 2." evidence="3">
    <original>GKRHNLRCMGNSGICRASCKKNEQPYLYCRNYQACCLQSYMRISISGKEENTDWSYEKQWPRLP</original>
    <variation>VECWMDGHCRLLCKDGEDSIIRCRNRKRCCVPSRYLTIQPVTIHGILGWTTPRMSTTAPQPKRNIHNG</variation>
    <location>
        <begin position="21"/>
        <end position="84"/>
    </location>
</feature>
<gene>
    <name type="primary">DEFB119</name>
    <name type="synonym">DEFB120</name>
</gene>
<evidence type="ECO:0000250" key="1"/>
<evidence type="ECO:0000255" key="2"/>
<evidence type="ECO:0000305" key="3"/>
<proteinExistence type="inferred from homology"/>